<accession>Q8DYU7</accession>
<evidence type="ECO:0000255" key="1">
    <source>
        <dbReference type="HAMAP-Rule" id="MF_01526"/>
    </source>
</evidence>
<evidence type="ECO:0000256" key="2">
    <source>
        <dbReference type="SAM" id="MobiDB-lite"/>
    </source>
</evidence>
<dbReference type="EMBL" id="AE009948">
    <property type="protein sequence ID" value="AAN00247.1"/>
    <property type="molecule type" value="Genomic_DNA"/>
</dbReference>
<dbReference type="RefSeq" id="NP_688374.1">
    <property type="nucleotide sequence ID" value="NC_004116.1"/>
</dbReference>
<dbReference type="RefSeq" id="WP_000024629.1">
    <property type="nucleotide sequence ID" value="NC_004116.1"/>
</dbReference>
<dbReference type="SMR" id="Q8DYU7"/>
<dbReference type="STRING" id="208435.SAG1376"/>
<dbReference type="KEGG" id="sag:SAG1376"/>
<dbReference type="PATRIC" id="fig|208435.3.peg.1384"/>
<dbReference type="HOGENOM" id="CLU_140243_2_0_9"/>
<dbReference type="OrthoDB" id="9811402at2"/>
<dbReference type="Proteomes" id="UP000000821">
    <property type="component" value="Chromosome"/>
</dbReference>
<dbReference type="Gene3D" id="1.20.1500.10">
    <property type="entry name" value="YheA/YmcA-like"/>
    <property type="match status" value="1"/>
</dbReference>
<dbReference type="HAMAP" id="MF_01526">
    <property type="entry name" value="UPF0342"/>
    <property type="match status" value="1"/>
</dbReference>
<dbReference type="InterPro" id="IPR010368">
    <property type="entry name" value="Com_YlbF"/>
</dbReference>
<dbReference type="InterPro" id="IPR023378">
    <property type="entry name" value="YheA/YmcA-like_dom_sf"/>
</dbReference>
<dbReference type="NCBIfam" id="NF010209">
    <property type="entry name" value="PRK13676.1-1"/>
    <property type="match status" value="1"/>
</dbReference>
<dbReference type="Pfam" id="PF06133">
    <property type="entry name" value="Com_YlbF"/>
    <property type="match status" value="1"/>
</dbReference>
<dbReference type="SUPFAM" id="SSF158622">
    <property type="entry name" value="YheA/YmcA-like"/>
    <property type="match status" value="1"/>
</dbReference>
<gene>
    <name type="ordered locus">SAG1376</name>
</gene>
<keyword id="KW-1185">Reference proteome</keyword>
<comment type="similarity">
    <text evidence="1">Belongs to the UPF0342 family.</text>
</comment>
<organism>
    <name type="scientific">Streptococcus agalactiae serotype V (strain ATCC BAA-611 / 2603 V/R)</name>
    <dbReference type="NCBI Taxonomy" id="208435"/>
    <lineage>
        <taxon>Bacteria</taxon>
        <taxon>Bacillati</taxon>
        <taxon>Bacillota</taxon>
        <taxon>Bacilli</taxon>
        <taxon>Lactobacillales</taxon>
        <taxon>Streptococcaceae</taxon>
        <taxon>Streptococcus</taxon>
    </lineage>
</organism>
<protein>
    <recommendedName>
        <fullName evidence="1">UPF0342 protein SAG1376</fullName>
    </recommendedName>
</protein>
<reference key="1">
    <citation type="journal article" date="2002" name="Proc. Natl. Acad. Sci. U.S.A.">
        <title>Complete genome sequence and comparative genomic analysis of an emerging human pathogen, serotype V Streptococcus agalactiae.</title>
        <authorList>
            <person name="Tettelin H."/>
            <person name="Masignani V."/>
            <person name="Cieslewicz M.J."/>
            <person name="Eisen J.A."/>
            <person name="Peterson S.N."/>
            <person name="Wessels M.R."/>
            <person name="Paulsen I.T."/>
            <person name="Nelson K.E."/>
            <person name="Margarit I."/>
            <person name="Read T.D."/>
            <person name="Madoff L.C."/>
            <person name="Wolf A.M."/>
            <person name="Beanan M.J."/>
            <person name="Brinkac L.M."/>
            <person name="Daugherty S.C."/>
            <person name="DeBoy R.T."/>
            <person name="Durkin A.S."/>
            <person name="Kolonay J.F."/>
            <person name="Madupu R."/>
            <person name="Lewis M.R."/>
            <person name="Radune D."/>
            <person name="Fedorova N.B."/>
            <person name="Scanlan D."/>
            <person name="Khouri H.M."/>
            <person name="Mulligan S."/>
            <person name="Carty H.A."/>
            <person name="Cline R.T."/>
            <person name="Van Aken S.E."/>
            <person name="Gill J."/>
            <person name="Scarselli M."/>
            <person name="Mora M."/>
            <person name="Iacobini E.T."/>
            <person name="Brettoni C."/>
            <person name="Galli G."/>
            <person name="Mariani M."/>
            <person name="Vegni F."/>
            <person name="Maione D."/>
            <person name="Rinaudo D."/>
            <person name="Rappuoli R."/>
            <person name="Telford J.L."/>
            <person name="Kasper D.L."/>
            <person name="Grandi G."/>
            <person name="Fraser C.M."/>
        </authorList>
    </citation>
    <scope>NUCLEOTIDE SEQUENCE [LARGE SCALE GENOMIC DNA]</scope>
    <source>
        <strain>ATCC BAA-611 / 2603 V/R</strain>
    </source>
</reference>
<feature type="chain" id="PRO_0000109992" description="UPF0342 protein SAG1376">
    <location>
        <begin position="1"/>
        <end position="111"/>
    </location>
</feature>
<feature type="region of interest" description="Disordered" evidence="2">
    <location>
        <begin position="52"/>
        <end position="71"/>
    </location>
</feature>
<feature type="compositionally biased region" description="Polar residues" evidence="2">
    <location>
        <begin position="52"/>
        <end position="63"/>
    </location>
</feature>
<sequence>MANVYDLANELERAVRALPEYQAVLTAKSAIESDADAQVLWQDFLATQSKVQEMMQSGQMPSQEEQDEMSKLGEKIESNDLLKVYFDQQQRLSVYMSDIEKIVFAPMQDLM</sequence>
<proteinExistence type="inferred from homology"/>
<name>Y1376_STRA5</name>